<name>TRMN6_PROMH</name>
<keyword id="KW-0963">Cytoplasm</keyword>
<keyword id="KW-0489">Methyltransferase</keyword>
<keyword id="KW-1185">Reference proteome</keyword>
<keyword id="KW-0949">S-adenosyl-L-methionine</keyword>
<keyword id="KW-0808">Transferase</keyword>
<keyword id="KW-0819">tRNA processing</keyword>
<accession>B4F055</accession>
<dbReference type="EC" id="2.1.1.223" evidence="1"/>
<dbReference type="EMBL" id="AM942759">
    <property type="protein sequence ID" value="CAR43937.1"/>
    <property type="molecule type" value="Genomic_DNA"/>
</dbReference>
<dbReference type="SMR" id="B4F055"/>
<dbReference type="EnsemblBacteria" id="CAR43937">
    <property type="protein sequence ID" value="CAR43937"/>
    <property type="gene ID" value="PMI1896"/>
</dbReference>
<dbReference type="GeneID" id="6802808"/>
<dbReference type="KEGG" id="pmr:PMI1896"/>
<dbReference type="PATRIC" id="fig|529507.6.peg.1848"/>
<dbReference type="eggNOG" id="COG4123">
    <property type="taxonomic scope" value="Bacteria"/>
</dbReference>
<dbReference type="HOGENOM" id="CLU_061983_0_0_6"/>
<dbReference type="Proteomes" id="UP000008319">
    <property type="component" value="Chromosome"/>
</dbReference>
<dbReference type="GO" id="GO:0005737">
    <property type="term" value="C:cytoplasm"/>
    <property type="evidence" value="ECO:0007669"/>
    <property type="project" value="UniProtKB-SubCell"/>
</dbReference>
<dbReference type="GO" id="GO:0003676">
    <property type="term" value="F:nucleic acid binding"/>
    <property type="evidence" value="ECO:0007669"/>
    <property type="project" value="InterPro"/>
</dbReference>
<dbReference type="GO" id="GO:0016430">
    <property type="term" value="F:tRNA (adenine-N6)-methyltransferase activity"/>
    <property type="evidence" value="ECO:0007669"/>
    <property type="project" value="UniProtKB-UniRule"/>
</dbReference>
<dbReference type="GO" id="GO:0032259">
    <property type="term" value="P:methylation"/>
    <property type="evidence" value="ECO:0007669"/>
    <property type="project" value="UniProtKB-KW"/>
</dbReference>
<dbReference type="GO" id="GO:0008033">
    <property type="term" value="P:tRNA processing"/>
    <property type="evidence" value="ECO:0007669"/>
    <property type="project" value="UniProtKB-UniRule"/>
</dbReference>
<dbReference type="CDD" id="cd02440">
    <property type="entry name" value="AdoMet_MTases"/>
    <property type="match status" value="1"/>
</dbReference>
<dbReference type="Gene3D" id="3.40.50.150">
    <property type="entry name" value="Vaccinia Virus protein VP39"/>
    <property type="match status" value="1"/>
</dbReference>
<dbReference type="HAMAP" id="MF_01872">
    <property type="entry name" value="tRNA_methyltr_YfiC"/>
    <property type="match status" value="1"/>
</dbReference>
<dbReference type="InterPro" id="IPR002052">
    <property type="entry name" value="DNA_methylase_N6_adenine_CS"/>
</dbReference>
<dbReference type="InterPro" id="IPR029063">
    <property type="entry name" value="SAM-dependent_MTases_sf"/>
</dbReference>
<dbReference type="InterPro" id="IPR007848">
    <property type="entry name" value="Small_mtfrase_dom"/>
</dbReference>
<dbReference type="InterPro" id="IPR050210">
    <property type="entry name" value="tRNA_Adenine-N(6)_MTase"/>
</dbReference>
<dbReference type="InterPro" id="IPR022882">
    <property type="entry name" value="tRNA_adenine-N6_MeTrfase"/>
</dbReference>
<dbReference type="NCBIfam" id="NF047853">
    <property type="entry name" value="tRm6a37MtseTrmN"/>
    <property type="match status" value="1"/>
</dbReference>
<dbReference type="PANTHER" id="PTHR47739">
    <property type="entry name" value="TRNA1(VAL) (ADENINE(37)-N6)-METHYLTRANSFERASE"/>
    <property type="match status" value="1"/>
</dbReference>
<dbReference type="PANTHER" id="PTHR47739:SF1">
    <property type="entry name" value="TRNA1(VAL) (ADENINE(37)-N6)-METHYLTRANSFERASE"/>
    <property type="match status" value="1"/>
</dbReference>
<dbReference type="Pfam" id="PF05175">
    <property type="entry name" value="MTS"/>
    <property type="match status" value="1"/>
</dbReference>
<dbReference type="SUPFAM" id="SSF53335">
    <property type="entry name" value="S-adenosyl-L-methionine-dependent methyltransferases"/>
    <property type="match status" value="1"/>
</dbReference>
<dbReference type="PROSITE" id="PS00092">
    <property type="entry name" value="N6_MTASE"/>
    <property type="match status" value="1"/>
</dbReference>
<proteinExistence type="inferred from homology"/>
<gene>
    <name type="ordered locus">PMI1896</name>
</gene>
<reference key="1">
    <citation type="journal article" date="2008" name="J. Bacteriol.">
        <title>Complete genome sequence of uropathogenic Proteus mirabilis, a master of both adherence and motility.</title>
        <authorList>
            <person name="Pearson M.M."/>
            <person name="Sebaihia M."/>
            <person name="Churcher C."/>
            <person name="Quail M.A."/>
            <person name="Seshasayee A.S."/>
            <person name="Luscombe N.M."/>
            <person name="Abdellah Z."/>
            <person name="Arrosmith C."/>
            <person name="Atkin B."/>
            <person name="Chillingworth T."/>
            <person name="Hauser H."/>
            <person name="Jagels K."/>
            <person name="Moule S."/>
            <person name="Mungall K."/>
            <person name="Norbertczak H."/>
            <person name="Rabbinowitsch E."/>
            <person name="Walker D."/>
            <person name="Whithead S."/>
            <person name="Thomson N.R."/>
            <person name="Rather P.N."/>
            <person name="Parkhill J."/>
            <person name="Mobley H.L.T."/>
        </authorList>
    </citation>
    <scope>NUCLEOTIDE SEQUENCE [LARGE SCALE GENOMIC DNA]</scope>
    <source>
        <strain>HI4320</strain>
    </source>
</reference>
<organism>
    <name type="scientific">Proteus mirabilis (strain HI4320)</name>
    <dbReference type="NCBI Taxonomy" id="529507"/>
    <lineage>
        <taxon>Bacteria</taxon>
        <taxon>Pseudomonadati</taxon>
        <taxon>Pseudomonadota</taxon>
        <taxon>Gammaproteobacteria</taxon>
        <taxon>Enterobacterales</taxon>
        <taxon>Morganellaceae</taxon>
        <taxon>Proteus</taxon>
    </lineage>
</organism>
<comment type="function">
    <text evidence="1">Specifically methylates the adenine in position 37 of tRNA(1)(Val) (anticodon cmo5UAC).</text>
</comment>
<comment type="catalytic activity">
    <reaction evidence="1">
        <text>adenosine(37) in tRNA1(Val) + S-adenosyl-L-methionine = N(6)-methyladenosine(37) in tRNA1(Val) + S-adenosyl-L-homocysteine + H(+)</text>
        <dbReference type="Rhea" id="RHEA:43160"/>
        <dbReference type="Rhea" id="RHEA-COMP:10369"/>
        <dbReference type="Rhea" id="RHEA-COMP:10370"/>
        <dbReference type="ChEBI" id="CHEBI:15378"/>
        <dbReference type="ChEBI" id="CHEBI:57856"/>
        <dbReference type="ChEBI" id="CHEBI:59789"/>
        <dbReference type="ChEBI" id="CHEBI:74411"/>
        <dbReference type="ChEBI" id="CHEBI:74449"/>
        <dbReference type="EC" id="2.1.1.223"/>
    </reaction>
</comment>
<comment type="subcellular location">
    <subcellularLocation>
        <location evidence="1">Cytoplasm</location>
    </subcellularLocation>
</comment>
<comment type="similarity">
    <text evidence="1">Belongs to the methyltransferase superfamily. tRNA (adenine-N(6)-)-methyltransferase family.</text>
</comment>
<protein>
    <recommendedName>
        <fullName evidence="1">tRNA1(Val) (adenine(37)-N6)-methyltransferase</fullName>
        <ecNumber evidence="1">2.1.1.223</ecNumber>
    </recommendedName>
    <alternativeName>
        <fullName evidence="1">tRNA m6A37 methyltransferase</fullName>
    </alternativeName>
</protein>
<sequence length="252" mass="28864">MKQKKVKKAGLRKGGFTFKQFFVAHDKCEMKVGTDGVLLGAWAPITKAKTVLDIGTGSGLIALMLAQRAPQVERIDGIELDEDAALQASENAQQSQWSSLIHIYHHDIYQYAQQAPTRYDLIVSNPPYFEPAVACRNQEREQARYTKTLTHEGLLDSAQQLITDEGLFCVVLPYLIGEQFIEISQRKGWNVVQRVNIKDSADKPYHRILLAFQRQYQGETKPCNIEELIIRNNDGHYTTQFQSWVTDFYLYY</sequence>
<evidence type="ECO:0000255" key="1">
    <source>
        <dbReference type="HAMAP-Rule" id="MF_01872"/>
    </source>
</evidence>
<feature type="chain" id="PRO_0000387400" description="tRNA1(Val) (adenine(37)-N6)-methyltransferase">
    <location>
        <begin position="1"/>
        <end position="252"/>
    </location>
</feature>